<feature type="chain" id="PRO_1000073881" description="Thymidylate synthase">
    <location>
        <begin position="1"/>
        <end position="264"/>
    </location>
</feature>
<feature type="active site" description="Nucleophile" evidence="1">
    <location>
        <position position="146"/>
    </location>
</feature>
<feature type="binding site" description="in other chain" evidence="1">
    <location>
        <position position="21"/>
    </location>
    <ligand>
        <name>dUMP</name>
        <dbReference type="ChEBI" id="CHEBI:246422"/>
        <note>ligand shared between dimeric partners</note>
    </ligand>
</feature>
<feature type="binding site" evidence="1">
    <location>
        <position position="51"/>
    </location>
    <ligand>
        <name>(6R)-5,10-methylene-5,6,7,8-tetrahydrofolate</name>
        <dbReference type="ChEBI" id="CHEBI:15636"/>
    </ligand>
</feature>
<feature type="binding site" evidence="1">
    <location>
        <begin position="126"/>
        <end position="127"/>
    </location>
    <ligand>
        <name>dUMP</name>
        <dbReference type="ChEBI" id="CHEBI:246422"/>
        <note>ligand shared between dimeric partners</note>
    </ligand>
</feature>
<feature type="binding site" description="in other chain" evidence="1">
    <location>
        <begin position="166"/>
        <end position="169"/>
    </location>
    <ligand>
        <name>dUMP</name>
        <dbReference type="ChEBI" id="CHEBI:246422"/>
        <note>ligand shared between dimeric partners</note>
    </ligand>
</feature>
<feature type="binding site" evidence="1">
    <location>
        <position position="169"/>
    </location>
    <ligand>
        <name>(6R)-5,10-methylene-5,6,7,8-tetrahydrofolate</name>
        <dbReference type="ChEBI" id="CHEBI:15636"/>
    </ligand>
</feature>
<feature type="binding site" description="in other chain" evidence="1">
    <location>
        <position position="177"/>
    </location>
    <ligand>
        <name>dUMP</name>
        <dbReference type="ChEBI" id="CHEBI:246422"/>
        <note>ligand shared between dimeric partners</note>
    </ligand>
</feature>
<feature type="binding site" description="in other chain" evidence="1">
    <location>
        <begin position="207"/>
        <end position="209"/>
    </location>
    <ligand>
        <name>dUMP</name>
        <dbReference type="ChEBI" id="CHEBI:246422"/>
        <note>ligand shared between dimeric partners</note>
    </ligand>
</feature>
<feature type="binding site" evidence="1">
    <location>
        <position position="263"/>
    </location>
    <ligand>
        <name>(6R)-5,10-methylene-5,6,7,8-tetrahydrofolate</name>
        <dbReference type="ChEBI" id="CHEBI:15636"/>
    </ligand>
</feature>
<keyword id="KW-0963">Cytoplasm</keyword>
<keyword id="KW-0489">Methyltransferase</keyword>
<keyword id="KW-0545">Nucleotide biosynthesis</keyword>
<keyword id="KW-1185">Reference proteome</keyword>
<keyword id="KW-0808">Transferase</keyword>
<name>TYSY_SALAR</name>
<dbReference type="EC" id="2.1.1.45" evidence="1"/>
<dbReference type="EMBL" id="CP000880">
    <property type="protein sequence ID" value="ABX24426.1"/>
    <property type="molecule type" value="Genomic_DNA"/>
</dbReference>
<dbReference type="SMR" id="A9MS82"/>
<dbReference type="STRING" id="41514.SARI_04659"/>
<dbReference type="KEGG" id="ses:SARI_04659"/>
<dbReference type="HOGENOM" id="CLU_021669_0_0_6"/>
<dbReference type="UniPathway" id="UPA00575"/>
<dbReference type="Proteomes" id="UP000002084">
    <property type="component" value="Chromosome"/>
</dbReference>
<dbReference type="GO" id="GO:0005829">
    <property type="term" value="C:cytosol"/>
    <property type="evidence" value="ECO:0007669"/>
    <property type="project" value="TreeGrafter"/>
</dbReference>
<dbReference type="GO" id="GO:0004799">
    <property type="term" value="F:thymidylate synthase activity"/>
    <property type="evidence" value="ECO:0007669"/>
    <property type="project" value="UniProtKB-UniRule"/>
</dbReference>
<dbReference type="GO" id="GO:0006231">
    <property type="term" value="P:dTMP biosynthetic process"/>
    <property type="evidence" value="ECO:0007669"/>
    <property type="project" value="UniProtKB-UniRule"/>
</dbReference>
<dbReference type="GO" id="GO:0006235">
    <property type="term" value="P:dTTP biosynthetic process"/>
    <property type="evidence" value="ECO:0007669"/>
    <property type="project" value="UniProtKB-UniRule"/>
</dbReference>
<dbReference type="GO" id="GO:0032259">
    <property type="term" value="P:methylation"/>
    <property type="evidence" value="ECO:0007669"/>
    <property type="project" value="UniProtKB-KW"/>
</dbReference>
<dbReference type="CDD" id="cd00351">
    <property type="entry name" value="TS_Pyrimidine_HMase"/>
    <property type="match status" value="1"/>
</dbReference>
<dbReference type="FunFam" id="3.30.572.10:FF:000001">
    <property type="entry name" value="Thymidylate synthase"/>
    <property type="match status" value="1"/>
</dbReference>
<dbReference type="Gene3D" id="3.30.572.10">
    <property type="entry name" value="Thymidylate synthase/dCMP hydroxymethylase domain"/>
    <property type="match status" value="1"/>
</dbReference>
<dbReference type="HAMAP" id="MF_00008">
    <property type="entry name" value="Thymidy_synth_bact"/>
    <property type="match status" value="1"/>
</dbReference>
<dbReference type="InterPro" id="IPR045097">
    <property type="entry name" value="Thymidate_synth/dCMP_Mease"/>
</dbReference>
<dbReference type="InterPro" id="IPR023451">
    <property type="entry name" value="Thymidate_synth/dCMP_Mease_dom"/>
</dbReference>
<dbReference type="InterPro" id="IPR036926">
    <property type="entry name" value="Thymidate_synth/dCMP_Mease_sf"/>
</dbReference>
<dbReference type="InterPro" id="IPR000398">
    <property type="entry name" value="Thymidylate_synthase"/>
</dbReference>
<dbReference type="InterPro" id="IPR020940">
    <property type="entry name" value="Thymidylate_synthase_AS"/>
</dbReference>
<dbReference type="NCBIfam" id="NF002497">
    <property type="entry name" value="PRK01827.1-3"/>
    <property type="match status" value="1"/>
</dbReference>
<dbReference type="NCBIfam" id="NF002499">
    <property type="entry name" value="PRK01827.1-5"/>
    <property type="match status" value="1"/>
</dbReference>
<dbReference type="NCBIfam" id="TIGR03284">
    <property type="entry name" value="thym_sym"/>
    <property type="match status" value="2"/>
</dbReference>
<dbReference type="PANTHER" id="PTHR11548:SF9">
    <property type="entry name" value="THYMIDYLATE SYNTHASE"/>
    <property type="match status" value="1"/>
</dbReference>
<dbReference type="PANTHER" id="PTHR11548">
    <property type="entry name" value="THYMIDYLATE SYNTHASE 1"/>
    <property type="match status" value="1"/>
</dbReference>
<dbReference type="Pfam" id="PF00303">
    <property type="entry name" value="Thymidylat_synt"/>
    <property type="match status" value="1"/>
</dbReference>
<dbReference type="PRINTS" id="PR00108">
    <property type="entry name" value="THYMDSNTHASE"/>
</dbReference>
<dbReference type="SUPFAM" id="SSF55831">
    <property type="entry name" value="Thymidylate synthase/dCMP hydroxymethylase"/>
    <property type="match status" value="1"/>
</dbReference>
<dbReference type="PROSITE" id="PS00091">
    <property type="entry name" value="THYMIDYLATE_SYNTHASE"/>
    <property type="match status" value="1"/>
</dbReference>
<protein>
    <recommendedName>
        <fullName evidence="1">Thymidylate synthase</fullName>
        <shortName evidence="1">TS</shortName>
        <shortName evidence="1">TSase</shortName>
        <ecNumber evidence="1">2.1.1.45</ecNumber>
    </recommendedName>
</protein>
<comment type="function">
    <text evidence="1">Catalyzes the reductive methylation of 2'-deoxyuridine-5'-monophosphate (dUMP) to 2'-deoxythymidine-5'-monophosphate (dTMP) while utilizing 5,10-methylenetetrahydrofolate (mTHF) as the methyl donor and reductant in the reaction, yielding dihydrofolate (DHF) as a by-product. This enzymatic reaction provides an intracellular de novo source of dTMP, an essential precursor for DNA biosynthesis.</text>
</comment>
<comment type="catalytic activity">
    <reaction evidence="1">
        <text>dUMP + (6R)-5,10-methylene-5,6,7,8-tetrahydrofolate = 7,8-dihydrofolate + dTMP</text>
        <dbReference type="Rhea" id="RHEA:12104"/>
        <dbReference type="ChEBI" id="CHEBI:15636"/>
        <dbReference type="ChEBI" id="CHEBI:57451"/>
        <dbReference type="ChEBI" id="CHEBI:63528"/>
        <dbReference type="ChEBI" id="CHEBI:246422"/>
        <dbReference type="EC" id="2.1.1.45"/>
    </reaction>
</comment>
<comment type="pathway">
    <text evidence="1">Pyrimidine metabolism; dTTP biosynthesis.</text>
</comment>
<comment type="subunit">
    <text evidence="1">Homodimer.</text>
</comment>
<comment type="subcellular location">
    <subcellularLocation>
        <location evidence="1">Cytoplasm</location>
    </subcellularLocation>
</comment>
<comment type="similarity">
    <text evidence="1">Belongs to the thymidylate synthase family. Bacterial-type ThyA subfamily.</text>
</comment>
<proteinExistence type="inferred from homology"/>
<sequence length="264" mass="30479">MKQYLELMKKVLDEGTQKNDRTGTGTLSIFGHQMRFNLQEGFPLVTTKRCHLRSIIHELLWFLQGDTNIAYLHENNVTIWDEWADENGDLGPVYGKQWRAWPTPDGHHIDQITTVLSQLKNDPDSRRIIVSAWNVGELDKMALAPCHAFFQFYVADRKLSCQLYQRSCDVFLGLPFNIASYALLVHMMAQQCDLEAGDFIWTGGDTHLYSNHMEQTHLQLSREPRALPKLVIKRKPDSLFDYRFDDFEIEGYDPHPGIKAPVAI</sequence>
<reference key="1">
    <citation type="submission" date="2007-11" db="EMBL/GenBank/DDBJ databases">
        <authorList>
            <consortium name="The Salmonella enterica serovar Arizonae Genome Sequencing Project"/>
            <person name="McClelland M."/>
            <person name="Sanderson E.K."/>
            <person name="Porwollik S."/>
            <person name="Spieth J."/>
            <person name="Clifton W.S."/>
            <person name="Fulton R."/>
            <person name="Chunyan W."/>
            <person name="Wollam A."/>
            <person name="Shah N."/>
            <person name="Pepin K."/>
            <person name="Bhonagiri V."/>
            <person name="Nash W."/>
            <person name="Johnson M."/>
            <person name="Thiruvilangam P."/>
            <person name="Wilson R."/>
        </authorList>
    </citation>
    <scope>NUCLEOTIDE SEQUENCE [LARGE SCALE GENOMIC DNA]</scope>
    <source>
        <strain>ATCC BAA-731 / CDC346-86 / RSK2980</strain>
    </source>
</reference>
<evidence type="ECO:0000255" key="1">
    <source>
        <dbReference type="HAMAP-Rule" id="MF_00008"/>
    </source>
</evidence>
<organism>
    <name type="scientific">Salmonella arizonae (strain ATCC BAA-731 / CDC346-86 / RSK2980)</name>
    <dbReference type="NCBI Taxonomy" id="41514"/>
    <lineage>
        <taxon>Bacteria</taxon>
        <taxon>Pseudomonadati</taxon>
        <taxon>Pseudomonadota</taxon>
        <taxon>Gammaproteobacteria</taxon>
        <taxon>Enterobacterales</taxon>
        <taxon>Enterobacteriaceae</taxon>
        <taxon>Salmonella</taxon>
    </lineage>
</organism>
<accession>A9MS82</accession>
<gene>
    <name evidence="1" type="primary">thyA</name>
    <name type="ordered locus">SARI_04659</name>
</gene>